<keyword id="KW-0004">4Fe-4S</keyword>
<keyword id="KW-0408">Iron</keyword>
<keyword id="KW-0411">Iron-sulfur</keyword>
<keyword id="KW-0479">Metal-binding</keyword>
<keyword id="KW-1185">Reference proteome</keyword>
<feature type="chain" id="PRO_0000383737" description="Cytosolic Fe-S cluster assembly factor NAR1">
    <location>
        <begin position="1"/>
        <end position="545"/>
    </location>
</feature>
<feature type="binding site" evidence="2">
    <location>
        <position position="20"/>
    </location>
    <ligand>
        <name>[4Fe-4S] cluster</name>
        <dbReference type="ChEBI" id="CHEBI:49883"/>
        <label>1</label>
    </ligand>
</feature>
<feature type="binding site" evidence="2">
    <location>
        <position position="74"/>
    </location>
    <ligand>
        <name>[4Fe-4S] cluster</name>
        <dbReference type="ChEBI" id="CHEBI:49883"/>
        <label>1</label>
    </ligand>
</feature>
<feature type="binding site" evidence="2">
    <location>
        <position position="77"/>
    </location>
    <ligand>
        <name>[4Fe-4S] cluster</name>
        <dbReference type="ChEBI" id="CHEBI:49883"/>
        <label>1</label>
    </ligand>
</feature>
<feature type="binding site" evidence="2">
    <location>
        <position position="80"/>
    </location>
    <ligand>
        <name>[4Fe-4S] cluster</name>
        <dbReference type="ChEBI" id="CHEBI:49883"/>
        <label>1</label>
    </ligand>
</feature>
<feature type="binding site" evidence="2">
    <location>
        <position position="188"/>
    </location>
    <ligand>
        <name>[4Fe-4S] cluster</name>
        <dbReference type="ChEBI" id="CHEBI:49883"/>
        <label>2</label>
    </ligand>
</feature>
<feature type="binding site" evidence="2">
    <location>
        <position position="243"/>
    </location>
    <ligand>
        <name>[4Fe-4S] cluster</name>
        <dbReference type="ChEBI" id="CHEBI:49883"/>
        <label>2</label>
    </ligand>
</feature>
<feature type="binding site" evidence="2">
    <location>
        <position position="454"/>
    </location>
    <ligand>
        <name>[4Fe-4S] cluster</name>
        <dbReference type="ChEBI" id="CHEBI:49883"/>
        <label>2</label>
    </ligand>
</feature>
<feature type="binding site" evidence="2">
    <location>
        <position position="458"/>
    </location>
    <ligand>
        <name>[4Fe-4S] cluster</name>
        <dbReference type="ChEBI" id="CHEBI:49883"/>
        <label>2</label>
    </ligand>
</feature>
<gene>
    <name type="primary">NAR1</name>
    <name type="ORF">PICST_33268</name>
</gene>
<dbReference type="EMBL" id="CP000501">
    <property type="protein sequence ID" value="ABN68216.2"/>
    <property type="molecule type" value="Genomic_DNA"/>
</dbReference>
<dbReference type="RefSeq" id="XP_001386245.2">
    <property type="nucleotide sequence ID" value="XM_001386208.1"/>
</dbReference>
<dbReference type="SMR" id="A3LYR2"/>
<dbReference type="FunCoup" id="A3LYR2">
    <property type="interactions" value="386"/>
</dbReference>
<dbReference type="STRING" id="322104.A3LYR2"/>
<dbReference type="GeneID" id="4840427"/>
<dbReference type="KEGG" id="pic:PICST_33268"/>
<dbReference type="eggNOG" id="KOG2439">
    <property type="taxonomic scope" value="Eukaryota"/>
</dbReference>
<dbReference type="HOGENOM" id="CLU_018240_0_1_1"/>
<dbReference type="InParanoid" id="A3LYR2"/>
<dbReference type="OMA" id="GYLHHVL"/>
<dbReference type="OrthoDB" id="10253113at2759"/>
<dbReference type="Proteomes" id="UP000002258">
    <property type="component" value="Chromosome 7"/>
</dbReference>
<dbReference type="GO" id="GO:0005829">
    <property type="term" value="C:cytosol"/>
    <property type="evidence" value="ECO:0007669"/>
    <property type="project" value="EnsemblFungi"/>
</dbReference>
<dbReference type="GO" id="GO:0016020">
    <property type="term" value="C:membrane"/>
    <property type="evidence" value="ECO:0007669"/>
    <property type="project" value="EnsemblFungi"/>
</dbReference>
<dbReference type="GO" id="GO:0051539">
    <property type="term" value="F:4 iron, 4 sulfur cluster binding"/>
    <property type="evidence" value="ECO:0007669"/>
    <property type="project" value="UniProtKB-KW"/>
</dbReference>
<dbReference type="GO" id="GO:0051536">
    <property type="term" value="F:iron-sulfur cluster binding"/>
    <property type="evidence" value="ECO:0000250"/>
    <property type="project" value="UniProtKB"/>
</dbReference>
<dbReference type="GO" id="GO:0046872">
    <property type="term" value="F:metal ion binding"/>
    <property type="evidence" value="ECO:0007669"/>
    <property type="project" value="UniProtKB-KW"/>
</dbReference>
<dbReference type="GO" id="GO:0016226">
    <property type="term" value="P:iron-sulfur cluster assembly"/>
    <property type="evidence" value="ECO:0000250"/>
    <property type="project" value="UniProtKB"/>
</dbReference>
<dbReference type="Gene3D" id="3.30.70.20">
    <property type="match status" value="1"/>
</dbReference>
<dbReference type="Gene3D" id="3.40.50.1780">
    <property type="match status" value="1"/>
</dbReference>
<dbReference type="Gene3D" id="3.40.950.10">
    <property type="entry name" value="Fe-only Hydrogenase (Larger Subunit), Chain L, domain 3"/>
    <property type="match status" value="1"/>
</dbReference>
<dbReference type="InterPro" id="IPR050340">
    <property type="entry name" value="Cytosolic_Fe-S_CAF"/>
</dbReference>
<dbReference type="InterPro" id="IPR009016">
    <property type="entry name" value="Fe_hydrogenase"/>
</dbReference>
<dbReference type="InterPro" id="IPR004108">
    <property type="entry name" value="Fe_hydrogenase_lsu_C"/>
</dbReference>
<dbReference type="PANTHER" id="PTHR11615">
    <property type="entry name" value="NITRATE, FORMATE, IRON DEHYDROGENASE"/>
    <property type="match status" value="1"/>
</dbReference>
<dbReference type="Pfam" id="PF02906">
    <property type="entry name" value="Fe_hyd_lg_C"/>
    <property type="match status" value="1"/>
</dbReference>
<dbReference type="SUPFAM" id="SSF53920">
    <property type="entry name" value="Fe-only hydrogenase"/>
    <property type="match status" value="1"/>
</dbReference>
<organism>
    <name type="scientific">Scheffersomyces stipitis (strain ATCC 58785 / CBS 6054 / NBRC 10063 / NRRL Y-11545)</name>
    <name type="common">Yeast</name>
    <name type="synonym">Pichia stipitis</name>
    <dbReference type="NCBI Taxonomy" id="322104"/>
    <lineage>
        <taxon>Eukaryota</taxon>
        <taxon>Fungi</taxon>
        <taxon>Dikarya</taxon>
        <taxon>Ascomycota</taxon>
        <taxon>Saccharomycotina</taxon>
        <taxon>Pichiomycetes</taxon>
        <taxon>Debaryomycetaceae</taxon>
        <taxon>Scheffersomyces</taxon>
    </lineage>
</organism>
<proteinExistence type="inferred from homology"/>
<protein>
    <recommendedName>
        <fullName>Cytosolic Fe-S cluster assembly factor NAR1</fullName>
    </recommendedName>
    <alternativeName>
        <fullName>Nuclear architecture-related protein 1</fullName>
    </alternativeName>
</protein>
<sequence>MSAILSADDLNDFISPGVACIKPPAQNSDQKFNSLNENGEVEIQIDSEGNPLEISKIDGKQTNLSPAQISLADCLACSGCITSAEEVLVAQHSHEELIKALNEKVDNNSTKVFVASISHQSRASLATAYNLSIEEIDKLLINLFINQMGFKYIVGTSIGRKLSLINEAQNLIEKKESEFDGPVLSSICPGWVLYAEKTHPYVLPRMSTVKSPQQITGCLLKTLAAHELGVTRNDIYHLSIMPCFDKKLESARPEKYGEQNTSNDVDCVLTAKELVTLLEQHSDKFQLIPPQAHTITNSAIPVVDLYSKCAPRTWPLVQYSWSNDSGSASGGYGYNYLKMYQNHLIMKHPTKYQQEGFSIDYVKGRNTDLTEMRLMYGSEKLASSAIVNGFRNIQNLVRKLKPTVKPGSTTGKGNALVARRRARVAGGITKASSPAGSDESADASKCDYVEIMACPNGCINGGGQINPPEDVSEKDWLSASLEKYNSIPLLDLAAMENVDTVAEIMQWSCLFREEFGVSENRLLKTWFNEVEKPTDSASILLGARW</sequence>
<evidence type="ECO:0000250" key="1"/>
<evidence type="ECO:0000255" key="2"/>
<evidence type="ECO:0000305" key="3"/>
<name>NAR1_PICST</name>
<accession>A3LYR2</accession>
<comment type="function">
    <text evidence="1">Component of the cytosolic Fe/S protein assembly machinery. Required for maturation of extramitochondrial Fe/S proteins. May play a role in the transfer of pre-assembled Fe/S clusters to target apoproteins (By similarity).</text>
</comment>
<comment type="similarity">
    <text evidence="3">Belongs to the NARF family.</text>
</comment>
<reference key="1">
    <citation type="journal article" date="2007" name="Nat. Biotechnol.">
        <title>Genome sequence of the lignocellulose-bioconverting and xylose-fermenting yeast Pichia stipitis.</title>
        <authorList>
            <person name="Jeffries T.W."/>
            <person name="Grigoriev I.V."/>
            <person name="Grimwood J."/>
            <person name="Laplaza J.M."/>
            <person name="Aerts A."/>
            <person name="Salamov A."/>
            <person name="Schmutz J."/>
            <person name="Lindquist E."/>
            <person name="Dehal P."/>
            <person name="Shapiro H."/>
            <person name="Jin Y.-S."/>
            <person name="Passoth V."/>
            <person name="Richardson P.M."/>
        </authorList>
    </citation>
    <scope>NUCLEOTIDE SEQUENCE [LARGE SCALE GENOMIC DNA]</scope>
    <source>
        <strain>ATCC 58785 / CBS 6054 / NBRC 10063 / NRRL Y-11545</strain>
    </source>
</reference>